<proteinExistence type="inferred from homology"/>
<feature type="chain" id="PRO_0000369281" description="Cytoplasmic tRNA 2-thiolation protein 2">
    <location>
        <begin position="1"/>
        <end position="523"/>
    </location>
</feature>
<feature type="region of interest" description="Disordered" evidence="2">
    <location>
        <begin position="53"/>
        <end position="81"/>
    </location>
</feature>
<feature type="compositionally biased region" description="Basic and acidic residues" evidence="2">
    <location>
        <begin position="57"/>
        <end position="67"/>
    </location>
</feature>
<protein>
    <recommendedName>
        <fullName evidence="1">Cytoplasmic tRNA 2-thiolation protein 2</fullName>
    </recommendedName>
</protein>
<reference key="1">
    <citation type="journal article" date="2005" name="Nature">
        <title>The genome of the social amoeba Dictyostelium discoideum.</title>
        <authorList>
            <person name="Eichinger L."/>
            <person name="Pachebat J.A."/>
            <person name="Gloeckner G."/>
            <person name="Rajandream M.A."/>
            <person name="Sucgang R."/>
            <person name="Berriman M."/>
            <person name="Song J."/>
            <person name="Olsen R."/>
            <person name="Szafranski K."/>
            <person name="Xu Q."/>
            <person name="Tunggal B."/>
            <person name="Kummerfeld S."/>
            <person name="Madera M."/>
            <person name="Konfortov B.A."/>
            <person name="Rivero F."/>
            <person name="Bankier A.T."/>
            <person name="Lehmann R."/>
            <person name="Hamlin N."/>
            <person name="Davies R."/>
            <person name="Gaudet P."/>
            <person name="Fey P."/>
            <person name="Pilcher K."/>
            <person name="Chen G."/>
            <person name="Saunders D."/>
            <person name="Sodergren E.J."/>
            <person name="Davis P."/>
            <person name="Kerhornou A."/>
            <person name="Nie X."/>
            <person name="Hall N."/>
            <person name="Anjard C."/>
            <person name="Hemphill L."/>
            <person name="Bason N."/>
            <person name="Farbrother P."/>
            <person name="Desany B."/>
            <person name="Just E."/>
            <person name="Morio T."/>
            <person name="Rost R."/>
            <person name="Churcher C.M."/>
            <person name="Cooper J."/>
            <person name="Haydock S."/>
            <person name="van Driessche N."/>
            <person name="Cronin A."/>
            <person name="Goodhead I."/>
            <person name="Muzny D.M."/>
            <person name="Mourier T."/>
            <person name="Pain A."/>
            <person name="Lu M."/>
            <person name="Harper D."/>
            <person name="Lindsay R."/>
            <person name="Hauser H."/>
            <person name="James K.D."/>
            <person name="Quiles M."/>
            <person name="Madan Babu M."/>
            <person name="Saito T."/>
            <person name="Buchrieser C."/>
            <person name="Wardroper A."/>
            <person name="Felder M."/>
            <person name="Thangavelu M."/>
            <person name="Johnson D."/>
            <person name="Knights A."/>
            <person name="Loulseged H."/>
            <person name="Mungall K.L."/>
            <person name="Oliver K."/>
            <person name="Price C."/>
            <person name="Quail M.A."/>
            <person name="Urushihara H."/>
            <person name="Hernandez J."/>
            <person name="Rabbinowitsch E."/>
            <person name="Steffen D."/>
            <person name="Sanders M."/>
            <person name="Ma J."/>
            <person name="Kohara Y."/>
            <person name="Sharp S."/>
            <person name="Simmonds M.N."/>
            <person name="Spiegler S."/>
            <person name="Tivey A."/>
            <person name="Sugano S."/>
            <person name="White B."/>
            <person name="Walker D."/>
            <person name="Woodward J.R."/>
            <person name="Winckler T."/>
            <person name="Tanaka Y."/>
            <person name="Shaulsky G."/>
            <person name="Schleicher M."/>
            <person name="Weinstock G.M."/>
            <person name="Rosenthal A."/>
            <person name="Cox E.C."/>
            <person name="Chisholm R.L."/>
            <person name="Gibbs R.A."/>
            <person name="Loomis W.F."/>
            <person name="Platzer M."/>
            <person name="Kay R.R."/>
            <person name="Williams J.G."/>
            <person name="Dear P.H."/>
            <person name="Noegel A.A."/>
            <person name="Barrell B.G."/>
            <person name="Kuspa A."/>
        </authorList>
    </citation>
    <scope>NUCLEOTIDE SEQUENCE [LARGE SCALE GENOMIC DNA]</scope>
    <source>
        <strain>AX4</strain>
    </source>
</reference>
<sequence>MSSEELPSCGINDNDINNTIPINTRKVQIIPNGNTQCVKCLYNVANNVKDKKLSKKEKKEQKLKEEENNNNNNEEPITQQQKPIGKPIINFRSEQLCWECYRELILKKFKLNIVKVRESKRDAEKLLVALSGGTCSSMLLELLKQCTEGSGKAKMFLDIKCVHIDESSITPYQNHNDTIEFLKEFNNVKLGFPNLEIIPLEDILGTVTPLGERTNQLKLQFAQLSSETSKEDLLLYYRNQLLIQVAHKLNCKKVILGTSSNRLAVQLVASTSKGRGFSVPNETSVIIEQPSNDIKFYQPMRDFLLKEIFIYYRHLNILPVPVMFSILNLKPKHSINTLCEDFLHCLQDISNQTVHTLLRSVDKLISPSIDSNYNCSICSSPLTSAEIKSLEKVILDNNNNINKENKNNNNNNNNNNNNNGCCSTTKTEDSSCCNKTEDNSSNNNNNNTGCCSSSSSTSTSSITVNKETLCYSCKILYRDFKSTPNIAPYIKENSKQLLTTSQLKNEIKDFLLNSDDDDDDEDN</sequence>
<accession>Q55EX7</accession>
<name>CTU2_DICDI</name>
<dbReference type="EMBL" id="AAFI02000004">
    <property type="protein sequence ID" value="EAL72946.1"/>
    <property type="molecule type" value="Genomic_DNA"/>
</dbReference>
<dbReference type="RefSeq" id="XP_646893.1">
    <property type="nucleotide sequence ID" value="XM_641801.1"/>
</dbReference>
<dbReference type="SMR" id="Q55EX7"/>
<dbReference type="FunCoup" id="Q55EX7">
    <property type="interactions" value="529"/>
</dbReference>
<dbReference type="STRING" id="44689.Q55EX7"/>
<dbReference type="PaxDb" id="44689-DDB0302516"/>
<dbReference type="EnsemblProtists" id="EAL72946">
    <property type="protein sequence ID" value="EAL72946"/>
    <property type="gene ID" value="DDB_G0268714"/>
</dbReference>
<dbReference type="GeneID" id="8616578"/>
<dbReference type="KEGG" id="ddi:DDB_G0268714"/>
<dbReference type="dictyBase" id="DDB_G0268714">
    <property type="gene designation" value="ctu2"/>
</dbReference>
<dbReference type="VEuPathDB" id="AmoebaDB:DDB_G0268714"/>
<dbReference type="eggNOG" id="KOG2594">
    <property type="taxonomic scope" value="Eukaryota"/>
</dbReference>
<dbReference type="HOGENOM" id="CLU_521211_0_0_1"/>
<dbReference type="InParanoid" id="Q55EX7"/>
<dbReference type="OMA" id="CHACRNI"/>
<dbReference type="PhylomeDB" id="Q55EX7"/>
<dbReference type="UniPathway" id="UPA00988"/>
<dbReference type="PRO" id="PR:Q55EX7"/>
<dbReference type="Proteomes" id="UP000002195">
    <property type="component" value="Chromosome 1"/>
</dbReference>
<dbReference type="GO" id="GO:0005829">
    <property type="term" value="C:cytosol"/>
    <property type="evidence" value="ECO:0000250"/>
    <property type="project" value="UniProtKB"/>
</dbReference>
<dbReference type="GO" id="GO:0002144">
    <property type="term" value="C:cytosolic tRNA wobble base thiouridylase complex"/>
    <property type="evidence" value="ECO:0000250"/>
    <property type="project" value="dictyBase"/>
</dbReference>
<dbReference type="GO" id="GO:0016779">
    <property type="term" value="F:nucleotidyltransferase activity"/>
    <property type="evidence" value="ECO:0007669"/>
    <property type="project" value="UniProtKB-UniRule"/>
</dbReference>
<dbReference type="GO" id="GO:0016783">
    <property type="term" value="F:sulfurtransferase activity"/>
    <property type="evidence" value="ECO:0000318"/>
    <property type="project" value="GO_Central"/>
</dbReference>
<dbReference type="GO" id="GO:0000049">
    <property type="term" value="F:tRNA binding"/>
    <property type="evidence" value="ECO:0007669"/>
    <property type="project" value="InterPro"/>
</dbReference>
<dbReference type="GO" id="GO:0032447">
    <property type="term" value="P:protein urmylation"/>
    <property type="evidence" value="ECO:0007669"/>
    <property type="project" value="UniProtKB-UniRule"/>
</dbReference>
<dbReference type="GO" id="GO:0034227">
    <property type="term" value="P:tRNA thio-modification"/>
    <property type="evidence" value="ECO:0000250"/>
    <property type="project" value="UniProtKB"/>
</dbReference>
<dbReference type="GO" id="GO:0002143">
    <property type="term" value="P:tRNA wobble position uridine thiolation"/>
    <property type="evidence" value="ECO:0000318"/>
    <property type="project" value="GO_Central"/>
</dbReference>
<dbReference type="GO" id="GO:0002098">
    <property type="term" value="P:tRNA wobble uridine modification"/>
    <property type="evidence" value="ECO:0000250"/>
    <property type="project" value="UniProtKB"/>
</dbReference>
<dbReference type="Gene3D" id="3.40.50.620">
    <property type="entry name" value="HUPs"/>
    <property type="match status" value="1"/>
</dbReference>
<dbReference type="HAMAP" id="MF_03054">
    <property type="entry name" value="CTU2"/>
    <property type="match status" value="1"/>
</dbReference>
<dbReference type="InterPro" id="IPR019407">
    <property type="entry name" value="CTU2"/>
</dbReference>
<dbReference type="InterPro" id="IPR014729">
    <property type="entry name" value="Rossmann-like_a/b/a_fold"/>
</dbReference>
<dbReference type="PANTHER" id="PTHR20882">
    <property type="entry name" value="CYTOPLASMIC TRNA 2-THIOLATION PROTEIN 2"/>
    <property type="match status" value="1"/>
</dbReference>
<dbReference type="PANTHER" id="PTHR20882:SF14">
    <property type="entry name" value="CYTOPLASMIC TRNA 2-THIOLATION PROTEIN 2"/>
    <property type="match status" value="1"/>
</dbReference>
<dbReference type="Pfam" id="PF10288">
    <property type="entry name" value="CTU2"/>
    <property type="match status" value="1"/>
</dbReference>
<dbReference type="SUPFAM" id="SSF52402">
    <property type="entry name" value="Adenine nucleotide alpha hydrolases-like"/>
    <property type="match status" value="1"/>
</dbReference>
<comment type="function">
    <text evidence="1">Plays a central role in 2-thiolation of mcm(5)S(2)U at tRNA wobble positions of tRNA(Lys), tRNA(Glu) and tRNA(Gln). May act by forming a heterodimer with ctu1/atpbd3 that ligates sulfur from thiocarboxylated urm1 onto the uridine of tRNAs at wobble position.</text>
</comment>
<comment type="pathway">
    <text evidence="1">tRNA modification; 5-methoxycarbonylmethyl-2-thiouridine-tRNA biosynthesis.</text>
</comment>
<comment type="subcellular location">
    <subcellularLocation>
        <location evidence="1">Cytoplasm</location>
    </subcellularLocation>
</comment>
<comment type="similarity">
    <text evidence="1">Belongs to the CTU2/NCS2 family.</text>
</comment>
<organism>
    <name type="scientific">Dictyostelium discoideum</name>
    <name type="common">Social amoeba</name>
    <dbReference type="NCBI Taxonomy" id="44689"/>
    <lineage>
        <taxon>Eukaryota</taxon>
        <taxon>Amoebozoa</taxon>
        <taxon>Evosea</taxon>
        <taxon>Eumycetozoa</taxon>
        <taxon>Dictyostelia</taxon>
        <taxon>Dictyosteliales</taxon>
        <taxon>Dictyosteliaceae</taxon>
        <taxon>Dictyostelium</taxon>
    </lineage>
</organism>
<gene>
    <name type="primary">ctu2</name>
    <name type="ORF">DDB_G0268714</name>
</gene>
<evidence type="ECO:0000255" key="1">
    <source>
        <dbReference type="HAMAP-Rule" id="MF_03054"/>
    </source>
</evidence>
<evidence type="ECO:0000256" key="2">
    <source>
        <dbReference type="SAM" id="MobiDB-lite"/>
    </source>
</evidence>
<keyword id="KW-0963">Cytoplasm</keyword>
<keyword id="KW-1185">Reference proteome</keyword>
<keyword id="KW-0819">tRNA processing</keyword>